<comment type="function">
    <text evidence="1">Catalyzes the formation of acetyl phosphate from acetate and ATP. Can also catalyze the reverse reaction.</text>
</comment>
<comment type="catalytic activity">
    <reaction evidence="1">
        <text>acetate + ATP = acetyl phosphate + ADP</text>
        <dbReference type="Rhea" id="RHEA:11352"/>
        <dbReference type="ChEBI" id="CHEBI:22191"/>
        <dbReference type="ChEBI" id="CHEBI:30089"/>
        <dbReference type="ChEBI" id="CHEBI:30616"/>
        <dbReference type="ChEBI" id="CHEBI:456216"/>
        <dbReference type="EC" id="2.7.2.1"/>
    </reaction>
</comment>
<comment type="cofactor">
    <cofactor evidence="1">
        <name>Mg(2+)</name>
        <dbReference type="ChEBI" id="CHEBI:18420"/>
    </cofactor>
    <cofactor evidence="1">
        <name>Mn(2+)</name>
        <dbReference type="ChEBI" id="CHEBI:29035"/>
    </cofactor>
    <text evidence="1">Mg(2+). Can also accept Mn(2+).</text>
</comment>
<comment type="pathway">
    <text evidence="1">Metabolic intermediate biosynthesis; acetyl-CoA biosynthesis; acetyl-CoA from acetate: step 1/2.</text>
</comment>
<comment type="subunit">
    <text evidence="1">Homodimer.</text>
</comment>
<comment type="subcellular location">
    <subcellularLocation>
        <location evidence="1">Cytoplasm</location>
    </subcellularLocation>
</comment>
<comment type="similarity">
    <text evidence="1">Belongs to the acetokinase family.</text>
</comment>
<reference key="1">
    <citation type="submission" date="2006-10" db="EMBL/GenBank/DDBJ databases">
        <title>Complete sequence of Syntrophobacter fumaroxidans MPOB.</title>
        <authorList>
            <consortium name="US DOE Joint Genome Institute"/>
            <person name="Copeland A."/>
            <person name="Lucas S."/>
            <person name="Lapidus A."/>
            <person name="Barry K."/>
            <person name="Detter J.C."/>
            <person name="Glavina del Rio T."/>
            <person name="Hammon N."/>
            <person name="Israni S."/>
            <person name="Pitluck S."/>
            <person name="Goltsman E.G."/>
            <person name="Martinez M."/>
            <person name="Schmutz J."/>
            <person name="Larimer F."/>
            <person name="Land M."/>
            <person name="Hauser L."/>
            <person name="Kyrpides N."/>
            <person name="Kim E."/>
            <person name="Boone D.R."/>
            <person name="Brockman F."/>
            <person name="Culley D."/>
            <person name="Ferry J."/>
            <person name="Gunsalus R."/>
            <person name="McInerney M.J."/>
            <person name="Morrison M."/>
            <person name="Plugge C."/>
            <person name="Rohlin L."/>
            <person name="Scholten J."/>
            <person name="Sieber J."/>
            <person name="Stams A.J.M."/>
            <person name="Worm P."/>
            <person name="Henstra A.M."/>
            <person name="Richardson P."/>
        </authorList>
    </citation>
    <scope>NUCLEOTIDE SEQUENCE [LARGE SCALE GENOMIC DNA]</scope>
    <source>
        <strain>DSM 10017 / MPOB</strain>
    </source>
</reference>
<feature type="chain" id="PRO_1000002279" description="Acetate kinase">
    <location>
        <begin position="1"/>
        <end position="411"/>
    </location>
</feature>
<feature type="active site" description="Proton donor/acceptor" evidence="1">
    <location>
        <position position="151"/>
    </location>
</feature>
<feature type="binding site" evidence="1">
    <location>
        <position position="7"/>
    </location>
    <ligand>
        <name>Mg(2+)</name>
        <dbReference type="ChEBI" id="CHEBI:18420"/>
    </ligand>
</feature>
<feature type="binding site" evidence="1">
    <location>
        <position position="14"/>
    </location>
    <ligand>
        <name>ATP</name>
        <dbReference type="ChEBI" id="CHEBI:30616"/>
    </ligand>
</feature>
<feature type="binding site" evidence="1">
    <location>
        <position position="94"/>
    </location>
    <ligand>
        <name>substrate</name>
    </ligand>
</feature>
<feature type="binding site" evidence="1">
    <location>
        <begin position="211"/>
        <end position="215"/>
    </location>
    <ligand>
        <name>ATP</name>
        <dbReference type="ChEBI" id="CHEBI:30616"/>
    </ligand>
</feature>
<feature type="binding site" evidence="1">
    <location>
        <begin position="285"/>
        <end position="287"/>
    </location>
    <ligand>
        <name>ATP</name>
        <dbReference type="ChEBI" id="CHEBI:30616"/>
    </ligand>
</feature>
<feature type="binding site" evidence="1">
    <location>
        <begin position="333"/>
        <end position="337"/>
    </location>
    <ligand>
        <name>ATP</name>
        <dbReference type="ChEBI" id="CHEBI:30616"/>
    </ligand>
</feature>
<feature type="binding site" evidence="1">
    <location>
        <position position="387"/>
    </location>
    <ligand>
        <name>Mg(2+)</name>
        <dbReference type="ChEBI" id="CHEBI:18420"/>
    </ligand>
</feature>
<feature type="site" description="Transition state stabilizer" evidence="1">
    <location>
        <position position="183"/>
    </location>
</feature>
<feature type="site" description="Transition state stabilizer" evidence="1">
    <location>
        <position position="244"/>
    </location>
</feature>
<sequence>MRVIVVNSGSSSIKYEVFALDDCSTLVDGLLERIGTRNARFKRRWLTDSGHWEEMEETRPIADHHEGFRFLLDAAVRYPTTRVAPGAFFGFGHRVVHGGEVFHEPVIVDDEVVRRIKDLIPLAPLHNPANVAAIEALRLIRPDVPNVAVFDTAFHQSMPPKAFLYALPHELYREHHVRRYGFHGTSHRYVAGEAARHLGLPEDYANLITLHLGNGASATAVQGGRSIDTSMGLTPLEGLIMGTRCGDLDPAVHFYISRKTGRSSEELEAMMNKESGLKGICGTNDMREIQRRSADGDARAQLAFEMFCYRIRKYIGSYSAALGRVDAIVFTGGIGENSAPVRRECCDGLRNLGVVLDHRRNEEDWSGLHEIQREDSPVKILVIPTDEEREIARQTIQTIRRAGVAGGARNQ</sequence>
<name>ACKA_SYNFM</name>
<evidence type="ECO:0000255" key="1">
    <source>
        <dbReference type="HAMAP-Rule" id="MF_00020"/>
    </source>
</evidence>
<keyword id="KW-0067">ATP-binding</keyword>
<keyword id="KW-0963">Cytoplasm</keyword>
<keyword id="KW-0418">Kinase</keyword>
<keyword id="KW-0460">Magnesium</keyword>
<keyword id="KW-0479">Metal-binding</keyword>
<keyword id="KW-0547">Nucleotide-binding</keyword>
<keyword id="KW-1185">Reference proteome</keyword>
<keyword id="KW-0808">Transferase</keyword>
<organism>
    <name type="scientific">Syntrophobacter fumaroxidans (strain DSM 10017 / MPOB)</name>
    <dbReference type="NCBI Taxonomy" id="335543"/>
    <lineage>
        <taxon>Bacteria</taxon>
        <taxon>Pseudomonadati</taxon>
        <taxon>Thermodesulfobacteriota</taxon>
        <taxon>Syntrophobacteria</taxon>
        <taxon>Syntrophobacterales</taxon>
        <taxon>Syntrophobacteraceae</taxon>
        <taxon>Syntrophobacter</taxon>
    </lineage>
</organism>
<gene>
    <name evidence="1" type="primary">ackA</name>
    <name type="ordered locus">Sfum_1473</name>
</gene>
<proteinExistence type="inferred from homology"/>
<protein>
    <recommendedName>
        <fullName evidence="1">Acetate kinase</fullName>
        <ecNumber evidence="1">2.7.2.1</ecNumber>
    </recommendedName>
    <alternativeName>
        <fullName evidence="1">Acetokinase</fullName>
    </alternativeName>
</protein>
<accession>A0LIB0</accession>
<dbReference type="EC" id="2.7.2.1" evidence="1"/>
<dbReference type="EMBL" id="CP000478">
    <property type="protein sequence ID" value="ABK17162.1"/>
    <property type="molecule type" value="Genomic_DNA"/>
</dbReference>
<dbReference type="RefSeq" id="WP_011698333.1">
    <property type="nucleotide sequence ID" value="NC_008554.1"/>
</dbReference>
<dbReference type="SMR" id="A0LIB0"/>
<dbReference type="FunCoup" id="A0LIB0">
    <property type="interactions" value="343"/>
</dbReference>
<dbReference type="STRING" id="335543.Sfum_1473"/>
<dbReference type="KEGG" id="sfu:Sfum_1473"/>
<dbReference type="eggNOG" id="COG0282">
    <property type="taxonomic scope" value="Bacteria"/>
</dbReference>
<dbReference type="HOGENOM" id="CLU_020352_0_1_7"/>
<dbReference type="InParanoid" id="A0LIB0"/>
<dbReference type="OrthoDB" id="9802453at2"/>
<dbReference type="UniPathway" id="UPA00340">
    <property type="reaction ID" value="UER00458"/>
</dbReference>
<dbReference type="Proteomes" id="UP000001784">
    <property type="component" value="Chromosome"/>
</dbReference>
<dbReference type="GO" id="GO:0005737">
    <property type="term" value="C:cytoplasm"/>
    <property type="evidence" value="ECO:0007669"/>
    <property type="project" value="UniProtKB-SubCell"/>
</dbReference>
<dbReference type="GO" id="GO:0008776">
    <property type="term" value="F:acetate kinase activity"/>
    <property type="evidence" value="ECO:0007669"/>
    <property type="project" value="UniProtKB-UniRule"/>
</dbReference>
<dbReference type="GO" id="GO:0005524">
    <property type="term" value="F:ATP binding"/>
    <property type="evidence" value="ECO:0007669"/>
    <property type="project" value="UniProtKB-KW"/>
</dbReference>
<dbReference type="GO" id="GO:0000287">
    <property type="term" value="F:magnesium ion binding"/>
    <property type="evidence" value="ECO:0007669"/>
    <property type="project" value="UniProtKB-UniRule"/>
</dbReference>
<dbReference type="GO" id="GO:0006083">
    <property type="term" value="P:acetate metabolic process"/>
    <property type="evidence" value="ECO:0007669"/>
    <property type="project" value="TreeGrafter"/>
</dbReference>
<dbReference type="GO" id="GO:0006085">
    <property type="term" value="P:acetyl-CoA biosynthetic process"/>
    <property type="evidence" value="ECO:0007669"/>
    <property type="project" value="UniProtKB-UniRule"/>
</dbReference>
<dbReference type="CDD" id="cd24010">
    <property type="entry name" value="ASKHA_NBD_AcK_PK"/>
    <property type="match status" value="1"/>
</dbReference>
<dbReference type="Gene3D" id="3.30.420.40">
    <property type="match status" value="2"/>
</dbReference>
<dbReference type="HAMAP" id="MF_00020">
    <property type="entry name" value="Acetate_kinase"/>
    <property type="match status" value="1"/>
</dbReference>
<dbReference type="InterPro" id="IPR004372">
    <property type="entry name" value="Ac/propionate_kinase"/>
</dbReference>
<dbReference type="InterPro" id="IPR000890">
    <property type="entry name" value="Aliphatic_acid_kin_short-chain"/>
</dbReference>
<dbReference type="InterPro" id="IPR023865">
    <property type="entry name" value="Aliphatic_acid_kinase_CS"/>
</dbReference>
<dbReference type="InterPro" id="IPR043129">
    <property type="entry name" value="ATPase_NBD"/>
</dbReference>
<dbReference type="NCBIfam" id="TIGR00016">
    <property type="entry name" value="ackA"/>
    <property type="match status" value="1"/>
</dbReference>
<dbReference type="PANTHER" id="PTHR21060">
    <property type="entry name" value="ACETATE KINASE"/>
    <property type="match status" value="1"/>
</dbReference>
<dbReference type="PANTHER" id="PTHR21060:SF15">
    <property type="entry name" value="ACETATE KINASE-RELATED"/>
    <property type="match status" value="1"/>
</dbReference>
<dbReference type="Pfam" id="PF00871">
    <property type="entry name" value="Acetate_kinase"/>
    <property type="match status" value="1"/>
</dbReference>
<dbReference type="PIRSF" id="PIRSF000722">
    <property type="entry name" value="Acetate_prop_kin"/>
    <property type="match status" value="1"/>
</dbReference>
<dbReference type="PRINTS" id="PR00471">
    <property type="entry name" value="ACETATEKNASE"/>
</dbReference>
<dbReference type="SUPFAM" id="SSF53067">
    <property type="entry name" value="Actin-like ATPase domain"/>
    <property type="match status" value="2"/>
</dbReference>
<dbReference type="PROSITE" id="PS01075">
    <property type="entry name" value="ACETATE_KINASE_1"/>
    <property type="match status" value="1"/>
</dbReference>
<dbReference type="PROSITE" id="PS01076">
    <property type="entry name" value="ACETATE_KINASE_2"/>
    <property type="match status" value="1"/>
</dbReference>